<reference key="1">
    <citation type="submission" date="2007-04" db="EMBL/GenBank/DDBJ databases">
        <title>Complete sequence of Shewanella putrefaciens CN-32.</title>
        <authorList>
            <consortium name="US DOE Joint Genome Institute"/>
            <person name="Copeland A."/>
            <person name="Lucas S."/>
            <person name="Lapidus A."/>
            <person name="Barry K."/>
            <person name="Detter J.C."/>
            <person name="Glavina del Rio T."/>
            <person name="Hammon N."/>
            <person name="Israni S."/>
            <person name="Dalin E."/>
            <person name="Tice H."/>
            <person name="Pitluck S."/>
            <person name="Chain P."/>
            <person name="Malfatti S."/>
            <person name="Shin M."/>
            <person name="Vergez L."/>
            <person name="Schmutz J."/>
            <person name="Larimer F."/>
            <person name="Land M."/>
            <person name="Hauser L."/>
            <person name="Kyrpides N."/>
            <person name="Mikhailova N."/>
            <person name="Romine M.F."/>
            <person name="Fredrickson J."/>
            <person name="Tiedje J."/>
            <person name="Richardson P."/>
        </authorList>
    </citation>
    <scope>NUCLEOTIDE SEQUENCE [LARGE SCALE GENOMIC DNA]</scope>
    <source>
        <strain>CN-32 / ATCC BAA-453</strain>
    </source>
</reference>
<organism>
    <name type="scientific">Shewanella putrefaciens (strain CN-32 / ATCC BAA-453)</name>
    <dbReference type="NCBI Taxonomy" id="319224"/>
    <lineage>
        <taxon>Bacteria</taxon>
        <taxon>Pseudomonadati</taxon>
        <taxon>Pseudomonadota</taxon>
        <taxon>Gammaproteobacteria</taxon>
        <taxon>Alteromonadales</taxon>
        <taxon>Shewanellaceae</taxon>
        <taxon>Shewanella</taxon>
    </lineage>
</organism>
<name>RL20_SHEPC</name>
<feature type="chain" id="PRO_1000049069" description="Large ribosomal subunit protein bL20">
    <location>
        <begin position="1"/>
        <end position="118"/>
    </location>
</feature>
<sequence length="118" mass="13567">MPRVKRGVTARARHKKVLKLAKGYYGARSRTYRVAVQAVTKAGQYAYRDRRQKKRQFRQLWIARINAAARQNGLSYSRFINGLKKASIEIDRKILADIAVFDKVVFATLVEKAKEALN</sequence>
<dbReference type="EMBL" id="CP000681">
    <property type="protein sequence ID" value="ABP75736.1"/>
    <property type="molecule type" value="Genomic_DNA"/>
</dbReference>
<dbReference type="SMR" id="A4Y703"/>
<dbReference type="STRING" id="319224.Sputcn32_2015"/>
<dbReference type="KEGG" id="spc:Sputcn32_2015"/>
<dbReference type="eggNOG" id="COG0292">
    <property type="taxonomic scope" value="Bacteria"/>
</dbReference>
<dbReference type="HOGENOM" id="CLU_123265_0_1_6"/>
<dbReference type="GO" id="GO:1990904">
    <property type="term" value="C:ribonucleoprotein complex"/>
    <property type="evidence" value="ECO:0007669"/>
    <property type="project" value="UniProtKB-KW"/>
</dbReference>
<dbReference type="GO" id="GO:0005840">
    <property type="term" value="C:ribosome"/>
    <property type="evidence" value="ECO:0007669"/>
    <property type="project" value="UniProtKB-KW"/>
</dbReference>
<dbReference type="GO" id="GO:0019843">
    <property type="term" value="F:rRNA binding"/>
    <property type="evidence" value="ECO:0007669"/>
    <property type="project" value="UniProtKB-UniRule"/>
</dbReference>
<dbReference type="GO" id="GO:0003735">
    <property type="term" value="F:structural constituent of ribosome"/>
    <property type="evidence" value="ECO:0007669"/>
    <property type="project" value="InterPro"/>
</dbReference>
<dbReference type="GO" id="GO:0000027">
    <property type="term" value="P:ribosomal large subunit assembly"/>
    <property type="evidence" value="ECO:0007669"/>
    <property type="project" value="UniProtKB-UniRule"/>
</dbReference>
<dbReference type="GO" id="GO:0006412">
    <property type="term" value="P:translation"/>
    <property type="evidence" value="ECO:0007669"/>
    <property type="project" value="InterPro"/>
</dbReference>
<dbReference type="CDD" id="cd07026">
    <property type="entry name" value="Ribosomal_L20"/>
    <property type="match status" value="1"/>
</dbReference>
<dbReference type="FunFam" id="1.10.1900.20:FF:000001">
    <property type="entry name" value="50S ribosomal protein L20"/>
    <property type="match status" value="1"/>
</dbReference>
<dbReference type="Gene3D" id="6.10.160.10">
    <property type="match status" value="1"/>
</dbReference>
<dbReference type="Gene3D" id="1.10.1900.20">
    <property type="entry name" value="Ribosomal protein L20"/>
    <property type="match status" value="1"/>
</dbReference>
<dbReference type="HAMAP" id="MF_00382">
    <property type="entry name" value="Ribosomal_bL20"/>
    <property type="match status" value="1"/>
</dbReference>
<dbReference type="InterPro" id="IPR005813">
    <property type="entry name" value="Ribosomal_bL20"/>
</dbReference>
<dbReference type="InterPro" id="IPR049946">
    <property type="entry name" value="RIBOSOMAL_L20_CS"/>
</dbReference>
<dbReference type="InterPro" id="IPR035566">
    <property type="entry name" value="Ribosomal_protein_bL20_C"/>
</dbReference>
<dbReference type="NCBIfam" id="TIGR01032">
    <property type="entry name" value="rplT_bact"/>
    <property type="match status" value="1"/>
</dbReference>
<dbReference type="PANTHER" id="PTHR10986">
    <property type="entry name" value="39S RIBOSOMAL PROTEIN L20"/>
    <property type="match status" value="1"/>
</dbReference>
<dbReference type="Pfam" id="PF00453">
    <property type="entry name" value="Ribosomal_L20"/>
    <property type="match status" value="1"/>
</dbReference>
<dbReference type="PRINTS" id="PR00062">
    <property type="entry name" value="RIBOSOMALL20"/>
</dbReference>
<dbReference type="SUPFAM" id="SSF74731">
    <property type="entry name" value="Ribosomal protein L20"/>
    <property type="match status" value="1"/>
</dbReference>
<dbReference type="PROSITE" id="PS00937">
    <property type="entry name" value="RIBOSOMAL_L20"/>
    <property type="match status" value="1"/>
</dbReference>
<keyword id="KW-0687">Ribonucleoprotein</keyword>
<keyword id="KW-0689">Ribosomal protein</keyword>
<keyword id="KW-0694">RNA-binding</keyword>
<keyword id="KW-0699">rRNA-binding</keyword>
<protein>
    <recommendedName>
        <fullName evidence="1">Large ribosomal subunit protein bL20</fullName>
    </recommendedName>
    <alternativeName>
        <fullName evidence="2">50S ribosomal protein L20</fullName>
    </alternativeName>
</protein>
<comment type="function">
    <text evidence="1">Binds directly to 23S ribosomal RNA and is necessary for the in vitro assembly process of the 50S ribosomal subunit. It is not involved in the protein synthesizing functions of that subunit.</text>
</comment>
<comment type="similarity">
    <text evidence="1">Belongs to the bacterial ribosomal protein bL20 family.</text>
</comment>
<accession>A4Y703</accession>
<evidence type="ECO:0000255" key="1">
    <source>
        <dbReference type="HAMAP-Rule" id="MF_00382"/>
    </source>
</evidence>
<evidence type="ECO:0000305" key="2"/>
<proteinExistence type="inferred from homology"/>
<gene>
    <name evidence="1" type="primary">rplT</name>
    <name type="ordered locus">Sputcn32_2015</name>
</gene>